<proteinExistence type="inferred from homology"/>
<sequence>MSNNVIEKVTELVQPITDRHNFELVEVEFVKEGQGWFLRVYIDKVGGINIEECAMVSDELSEILDAQDPDPIPQAYFLEVSSPGAERPLKTKEDLTRSIGEYIHISLYASINKQKVFEGYLKSFENDEIVLDYLDKTRHKELKVTYDQVAFARLAIKI</sequence>
<accession>Q03FS7</accession>
<evidence type="ECO:0000255" key="1">
    <source>
        <dbReference type="HAMAP-Rule" id="MF_01077"/>
    </source>
</evidence>
<comment type="function">
    <text evidence="1">Required for maturation of 30S ribosomal subunits.</text>
</comment>
<comment type="subcellular location">
    <subcellularLocation>
        <location evidence="1">Cytoplasm</location>
    </subcellularLocation>
</comment>
<comment type="similarity">
    <text evidence="1">Belongs to the RimP family.</text>
</comment>
<organism>
    <name type="scientific">Pediococcus pentosaceus (strain ATCC 25745 / CCUG 21536 / LMG 10740 / 183-1w)</name>
    <dbReference type="NCBI Taxonomy" id="278197"/>
    <lineage>
        <taxon>Bacteria</taxon>
        <taxon>Bacillati</taxon>
        <taxon>Bacillota</taxon>
        <taxon>Bacilli</taxon>
        <taxon>Lactobacillales</taxon>
        <taxon>Lactobacillaceae</taxon>
        <taxon>Pediococcus</taxon>
    </lineage>
</organism>
<reference key="1">
    <citation type="journal article" date="2006" name="Proc. Natl. Acad. Sci. U.S.A.">
        <title>Comparative genomics of the lactic acid bacteria.</title>
        <authorList>
            <person name="Makarova K.S."/>
            <person name="Slesarev A."/>
            <person name="Wolf Y.I."/>
            <person name="Sorokin A."/>
            <person name="Mirkin B."/>
            <person name="Koonin E.V."/>
            <person name="Pavlov A."/>
            <person name="Pavlova N."/>
            <person name="Karamychev V."/>
            <person name="Polouchine N."/>
            <person name="Shakhova V."/>
            <person name="Grigoriev I."/>
            <person name="Lou Y."/>
            <person name="Rohksar D."/>
            <person name="Lucas S."/>
            <person name="Huang K."/>
            <person name="Goodstein D.M."/>
            <person name="Hawkins T."/>
            <person name="Plengvidhya V."/>
            <person name="Welker D."/>
            <person name="Hughes J."/>
            <person name="Goh Y."/>
            <person name="Benson A."/>
            <person name="Baldwin K."/>
            <person name="Lee J.-H."/>
            <person name="Diaz-Muniz I."/>
            <person name="Dosti B."/>
            <person name="Smeianov V."/>
            <person name="Wechter W."/>
            <person name="Barabote R."/>
            <person name="Lorca G."/>
            <person name="Altermann E."/>
            <person name="Barrangou R."/>
            <person name="Ganesan B."/>
            <person name="Xie Y."/>
            <person name="Rawsthorne H."/>
            <person name="Tamir D."/>
            <person name="Parker C."/>
            <person name="Breidt F."/>
            <person name="Broadbent J.R."/>
            <person name="Hutkins R."/>
            <person name="O'Sullivan D."/>
            <person name="Steele J."/>
            <person name="Unlu G."/>
            <person name="Saier M.H. Jr."/>
            <person name="Klaenhammer T."/>
            <person name="Richardson P."/>
            <person name="Kozyavkin S."/>
            <person name="Weimer B.C."/>
            <person name="Mills D.A."/>
        </authorList>
    </citation>
    <scope>NUCLEOTIDE SEQUENCE [LARGE SCALE GENOMIC DNA]</scope>
    <source>
        <strain>ATCC 25745 / CCUG 21536 / LMG 10740 / 183-1w</strain>
    </source>
</reference>
<dbReference type="EMBL" id="CP000422">
    <property type="protein sequence ID" value="ABJ67945.1"/>
    <property type="molecule type" value="Genomic_DNA"/>
</dbReference>
<dbReference type="RefSeq" id="WP_002833614.1">
    <property type="nucleotide sequence ID" value="NC_008525.1"/>
</dbReference>
<dbReference type="SMR" id="Q03FS7"/>
<dbReference type="STRING" id="278197.PEPE_0886"/>
<dbReference type="GeneID" id="33062687"/>
<dbReference type="KEGG" id="ppe:PEPE_0886"/>
<dbReference type="eggNOG" id="COG0779">
    <property type="taxonomic scope" value="Bacteria"/>
</dbReference>
<dbReference type="HOGENOM" id="CLU_070525_2_0_9"/>
<dbReference type="OrthoDB" id="9805006at2"/>
<dbReference type="Proteomes" id="UP000000773">
    <property type="component" value="Chromosome"/>
</dbReference>
<dbReference type="GO" id="GO:0005829">
    <property type="term" value="C:cytosol"/>
    <property type="evidence" value="ECO:0007669"/>
    <property type="project" value="TreeGrafter"/>
</dbReference>
<dbReference type="GO" id="GO:0000028">
    <property type="term" value="P:ribosomal small subunit assembly"/>
    <property type="evidence" value="ECO:0007669"/>
    <property type="project" value="TreeGrafter"/>
</dbReference>
<dbReference type="GO" id="GO:0006412">
    <property type="term" value="P:translation"/>
    <property type="evidence" value="ECO:0007669"/>
    <property type="project" value="TreeGrafter"/>
</dbReference>
<dbReference type="CDD" id="cd01734">
    <property type="entry name" value="YlxS_C"/>
    <property type="match status" value="1"/>
</dbReference>
<dbReference type="FunFam" id="3.30.300.70:FF:000001">
    <property type="entry name" value="Ribosome maturation factor RimP"/>
    <property type="match status" value="1"/>
</dbReference>
<dbReference type="Gene3D" id="2.30.30.180">
    <property type="entry name" value="Ribosome maturation factor RimP, C-terminal domain"/>
    <property type="match status" value="1"/>
</dbReference>
<dbReference type="Gene3D" id="3.30.300.70">
    <property type="entry name" value="RimP-like superfamily, N-terminal"/>
    <property type="match status" value="1"/>
</dbReference>
<dbReference type="HAMAP" id="MF_01077">
    <property type="entry name" value="RimP"/>
    <property type="match status" value="1"/>
</dbReference>
<dbReference type="InterPro" id="IPR003728">
    <property type="entry name" value="Ribosome_maturation_RimP"/>
</dbReference>
<dbReference type="InterPro" id="IPR028998">
    <property type="entry name" value="RimP_C"/>
</dbReference>
<dbReference type="InterPro" id="IPR036847">
    <property type="entry name" value="RimP_C_sf"/>
</dbReference>
<dbReference type="InterPro" id="IPR028989">
    <property type="entry name" value="RimP_N"/>
</dbReference>
<dbReference type="InterPro" id="IPR035956">
    <property type="entry name" value="RimP_N_sf"/>
</dbReference>
<dbReference type="NCBIfam" id="NF000928">
    <property type="entry name" value="PRK00092.1-2"/>
    <property type="match status" value="1"/>
</dbReference>
<dbReference type="PANTHER" id="PTHR33867">
    <property type="entry name" value="RIBOSOME MATURATION FACTOR RIMP"/>
    <property type="match status" value="1"/>
</dbReference>
<dbReference type="PANTHER" id="PTHR33867:SF1">
    <property type="entry name" value="RIBOSOME MATURATION FACTOR RIMP"/>
    <property type="match status" value="1"/>
</dbReference>
<dbReference type="Pfam" id="PF17384">
    <property type="entry name" value="DUF150_C"/>
    <property type="match status" value="1"/>
</dbReference>
<dbReference type="Pfam" id="PF02576">
    <property type="entry name" value="RimP_N"/>
    <property type="match status" value="1"/>
</dbReference>
<dbReference type="SUPFAM" id="SSF74942">
    <property type="entry name" value="YhbC-like, C-terminal domain"/>
    <property type="match status" value="1"/>
</dbReference>
<dbReference type="SUPFAM" id="SSF75420">
    <property type="entry name" value="YhbC-like, N-terminal domain"/>
    <property type="match status" value="1"/>
</dbReference>
<feature type="chain" id="PRO_0000384726" description="Ribosome maturation factor RimP">
    <location>
        <begin position="1"/>
        <end position="158"/>
    </location>
</feature>
<keyword id="KW-0963">Cytoplasm</keyword>
<keyword id="KW-0690">Ribosome biogenesis</keyword>
<name>RIMP_PEDPA</name>
<protein>
    <recommendedName>
        <fullName evidence="1">Ribosome maturation factor RimP</fullName>
    </recommendedName>
</protein>
<gene>
    <name evidence="1" type="primary">rimP</name>
    <name type="ordered locus">PEPE_0886</name>
</gene>